<accession>Q720K1</accession>
<dbReference type="EC" id="3.1.26.4" evidence="1"/>
<dbReference type="EMBL" id="AE017262">
    <property type="protein sequence ID" value="AAT04013.1"/>
    <property type="status" value="ALT_INIT"/>
    <property type="molecule type" value="Genomic_DNA"/>
</dbReference>
<dbReference type="RefSeq" id="WP_015084716.1">
    <property type="nucleotide sequence ID" value="NC_002973.6"/>
</dbReference>
<dbReference type="SMR" id="Q720K1"/>
<dbReference type="KEGG" id="lmf:LMOf2365_1237"/>
<dbReference type="HOGENOM" id="CLU_059546_1_0_9"/>
<dbReference type="GO" id="GO:0005737">
    <property type="term" value="C:cytoplasm"/>
    <property type="evidence" value="ECO:0007669"/>
    <property type="project" value="UniProtKB-SubCell"/>
</dbReference>
<dbReference type="GO" id="GO:0032299">
    <property type="term" value="C:ribonuclease H2 complex"/>
    <property type="evidence" value="ECO:0007669"/>
    <property type="project" value="TreeGrafter"/>
</dbReference>
<dbReference type="GO" id="GO:0000287">
    <property type="term" value="F:magnesium ion binding"/>
    <property type="evidence" value="ECO:0007669"/>
    <property type="project" value="UniProtKB-UniRule"/>
</dbReference>
<dbReference type="GO" id="GO:0003723">
    <property type="term" value="F:RNA binding"/>
    <property type="evidence" value="ECO:0007669"/>
    <property type="project" value="InterPro"/>
</dbReference>
<dbReference type="GO" id="GO:0004523">
    <property type="term" value="F:RNA-DNA hybrid ribonuclease activity"/>
    <property type="evidence" value="ECO:0007669"/>
    <property type="project" value="UniProtKB-UniRule"/>
</dbReference>
<dbReference type="GO" id="GO:0043137">
    <property type="term" value="P:DNA replication, removal of RNA primer"/>
    <property type="evidence" value="ECO:0007669"/>
    <property type="project" value="TreeGrafter"/>
</dbReference>
<dbReference type="GO" id="GO:0006298">
    <property type="term" value="P:mismatch repair"/>
    <property type="evidence" value="ECO:0007669"/>
    <property type="project" value="TreeGrafter"/>
</dbReference>
<dbReference type="CDD" id="cd06590">
    <property type="entry name" value="RNase_HII_bacteria_HIII_like"/>
    <property type="match status" value="1"/>
</dbReference>
<dbReference type="CDD" id="cd14796">
    <property type="entry name" value="RNAse_HIII_N"/>
    <property type="match status" value="1"/>
</dbReference>
<dbReference type="FunFam" id="3.30.420.10:FF:000047">
    <property type="entry name" value="Ribonuclease HIII"/>
    <property type="match status" value="1"/>
</dbReference>
<dbReference type="Gene3D" id="3.30.420.10">
    <property type="entry name" value="Ribonuclease H-like superfamily/Ribonuclease H"/>
    <property type="match status" value="1"/>
</dbReference>
<dbReference type="Gene3D" id="3.30.310.10">
    <property type="entry name" value="TATA-Binding Protein"/>
    <property type="match status" value="1"/>
</dbReference>
<dbReference type="HAMAP" id="MF_00053">
    <property type="entry name" value="RNase_HIII"/>
    <property type="match status" value="1"/>
</dbReference>
<dbReference type="InterPro" id="IPR001352">
    <property type="entry name" value="RNase_HII/HIII"/>
</dbReference>
<dbReference type="InterPro" id="IPR024567">
    <property type="entry name" value="RNase_HII/HIII_dom"/>
</dbReference>
<dbReference type="InterPro" id="IPR004641">
    <property type="entry name" value="RNase_HIII"/>
</dbReference>
<dbReference type="InterPro" id="IPR024568">
    <property type="entry name" value="RNase_HIII_N"/>
</dbReference>
<dbReference type="InterPro" id="IPR012337">
    <property type="entry name" value="RNaseH-like_sf"/>
</dbReference>
<dbReference type="InterPro" id="IPR036397">
    <property type="entry name" value="RNaseH_sf"/>
</dbReference>
<dbReference type="InterPro" id="IPR012295">
    <property type="entry name" value="TBP_dom_sf"/>
</dbReference>
<dbReference type="NCBIfam" id="TIGR00716">
    <property type="entry name" value="rnhC"/>
    <property type="match status" value="1"/>
</dbReference>
<dbReference type="PANTHER" id="PTHR10954:SF23">
    <property type="entry name" value="RIBONUCLEASE"/>
    <property type="match status" value="1"/>
</dbReference>
<dbReference type="PANTHER" id="PTHR10954">
    <property type="entry name" value="RIBONUCLEASE H2 SUBUNIT A"/>
    <property type="match status" value="1"/>
</dbReference>
<dbReference type="Pfam" id="PF11858">
    <property type="entry name" value="DUF3378"/>
    <property type="match status" value="1"/>
</dbReference>
<dbReference type="Pfam" id="PF01351">
    <property type="entry name" value="RNase_HII"/>
    <property type="match status" value="1"/>
</dbReference>
<dbReference type="PIRSF" id="PIRSF037748">
    <property type="entry name" value="RnhC"/>
    <property type="match status" value="1"/>
</dbReference>
<dbReference type="SUPFAM" id="SSF53098">
    <property type="entry name" value="Ribonuclease H-like"/>
    <property type="match status" value="1"/>
</dbReference>
<dbReference type="PROSITE" id="PS51975">
    <property type="entry name" value="RNASE_H_2"/>
    <property type="match status" value="1"/>
</dbReference>
<name>RNH3_LISMF</name>
<sequence>MANTVILVDQPTLEKMKQTYLPFSNPKLPPGAVFAAKKPGVSITGYKSRKVMFQGVNGEVEAKKWVATLPESKTKAPSVSKGILPANFASKNVIGSDEVGTGDFFGPITVCAAYVDAEMMPLLKELGVKDSKAMKDPEICRIAEKIMPLVPHSVLLCPNPKYNELQKRGMNQGQMKALLHNRAIENVLKKLAPVKPEAILIDQFAEKNTYYRYLAKEPSIIREDVFFATKAEGLHLSVAAASIIARYKFVQAFDAMSKEVGIPLPKGAGPHVDAVAAEIIERFGLETLTKYTKQHFANTEKALKMVKK</sequence>
<gene>
    <name evidence="1" type="primary">rnhC</name>
    <name type="ordered locus">LMOf2365_1237</name>
</gene>
<keyword id="KW-0963">Cytoplasm</keyword>
<keyword id="KW-0255">Endonuclease</keyword>
<keyword id="KW-0378">Hydrolase</keyword>
<keyword id="KW-0460">Magnesium</keyword>
<keyword id="KW-0479">Metal-binding</keyword>
<keyword id="KW-0540">Nuclease</keyword>
<comment type="function">
    <text evidence="1">Endonuclease that specifically degrades the RNA of RNA-DNA hybrids.</text>
</comment>
<comment type="catalytic activity">
    <reaction evidence="1">
        <text>Endonucleolytic cleavage to 5'-phosphomonoester.</text>
        <dbReference type="EC" id="3.1.26.4"/>
    </reaction>
</comment>
<comment type="cofactor">
    <cofactor evidence="1">
        <name>Mn(2+)</name>
        <dbReference type="ChEBI" id="CHEBI:29035"/>
    </cofactor>
    <cofactor evidence="1">
        <name>Mg(2+)</name>
        <dbReference type="ChEBI" id="CHEBI:18420"/>
    </cofactor>
    <text evidence="1">Manganese or magnesium. Binds 1 divalent metal ion per monomer in the absence of substrate. May bind a second metal ion after substrate binding.</text>
</comment>
<comment type="subcellular location">
    <subcellularLocation>
        <location evidence="1">Cytoplasm</location>
    </subcellularLocation>
</comment>
<comment type="similarity">
    <text evidence="1">Belongs to the RNase HII family. RnhC subfamily.</text>
</comment>
<comment type="sequence caution" evidence="3">
    <conflict type="erroneous initiation">
        <sequence resource="EMBL-CDS" id="AAT04013"/>
    </conflict>
</comment>
<evidence type="ECO:0000255" key="1">
    <source>
        <dbReference type="HAMAP-Rule" id="MF_00053"/>
    </source>
</evidence>
<evidence type="ECO:0000255" key="2">
    <source>
        <dbReference type="PROSITE-ProRule" id="PRU01319"/>
    </source>
</evidence>
<evidence type="ECO:0000305" key="3"/>
<organism>
    <name type="scientific">Listeria monocytogenes serotype 4b (strain F2365)</name>
    <dbReference type="NCBI Taxonomy" id="265669"/>
    <lineage>
        <taxon>Bacteria</taxon>
        <taxon>Bacillati</taxon>
        <taxon>Bacillota</taxon>
        <taxon>Bacilli</taxon>
        <taxon>Bacillales</taxon>
        <taxon>Listeriaceae</taxon>
        <taxon>Listeria</taxon>
    </lineage>
</organism>
<reference key="1">
    <citation type="journal article" date="2004" name="Nucleic Acids Res.">
        <title>Whole genome comparisons of serotype 4b and 1/2a strains of the food-borne pathogen Listeria monocytogenes reveal new insights into the core genome components of this species.</title>
        <authorList>
            <person name="Nelson K.E."/>
            <person name="Fouts D.E."/>
            <person name="Mongodin E.F."/>
            <person name="Ravel J."/>
            <person name="DeBoy R.T."/>
            <person name="Kolonay J.F."/>
            <person name="Rasko D.A."/>
            <person name="Angiuoli S.V."/>
            <person name="Gill S.R."/>
            <person name="Paulsen I.T."/>
            <person name="Peterson J.D."/>
            <person name="White O."/>
            <person name="Nelson W.C."/>
            <person name="Nierman W.C."/>
            <person name="Beanan M.J."/>
            <person name="Brinkac L.M."/>
            <person name="Daugherty S.C."/>
            <person name="Dodson R.J."/>
            <person name="Durkin A.S."/>
            <person name="Madupu R."/>
            <person name="Haft D.H."/>
            <person name="Selengut J."/>
            <person name="Van Aken S.E."/>
            <person name="Khouri H.M."/>
            <person name="Fedorova N."/>
            <person name="Forberger H.A."/>
            <person name="Tran B."/>
            <person name="Kathariou S."/>
            <person name="Wonderling L.D."/>
            <person name="Uhlich G.A."/>
            <person name="Bayles D.O."/>
            <person name="Luchansky J.B."/>
            <person name="Fraser C.M."/>
        </authorList>
    </citation>
    <scope>NUCLEOTIDE SEQUENCE [LARGE SCALE GENOMIC DNA]</scope>
    <source>
        <strain>F2365</strain>
    </source>
</reference>
<feature type="chain" id="PRO_0000111688" description="Ribonuclease HIII">
    <location>
        <begin position="1"/>
        <end position="308"/>
    </location>
</feature>
<feature type="domain" description="RNase H type-2" evidence="2">
    <location>
        <begin position="91"/>
        <end position="308"/>
    </location>
</feature>
<feature type="binding site" evidence="1">
    <location>
        <position position="97"/>
    </location>
    <ligand>
        <name>a divalent metal cation</name>
        <dbReference type="ChEBI" id="CHEBI:60240"/>
    </ligand>
</feature>
<feature type="binding site" evidence="1">
    <location>
        <position position="98"/>
    </location>
    <ligand>
        <name>a divalent metal cation</name>
        <dbReference type="ChEBI" id="CHEBI:60240"/>
    </ligand>
</feature>
<feature type="binding site" evidence="1">
    <location>
        <position position="202"/>
    </location>
    <ligand>
        <name>a divalent metal cation</name>
        <dbReference type="ChEBI" id="CHEBI:60240"/>
    </ligand>
</feature>
<proteinExistence type="inferred from homology"/>
<protein>
    <recommendedName>
        <fullName evidence="1">Ribonuclease HIII</fullName>
        <shortName evidence="1">RNase HIII</shortName>
        <ecNumber evidence="1">3.1.26.4</ecNumber>
    </recommendedName>
</protein>